<keyword id="KW-0007">Acetylation</keyword>
<keyword id="KW-0560">Oxidoreductase</keyword>
<keyword id="KW-1185">Reference proteome</keyword>
<evidence type="ECO:0000250" key="1">
    <source>
        <dbReference type="UniProtKB" id="Q3UNZ8"/>
    </source>
</evidence>
<evidence type="ECO:0000305" key="2"/>
<comment type="similarity">
    <text evidence="2">Belongs to the zinc-containing alcohol dehydrogenase family. Quinone oxidoreductase subfamily.</text>
</comment>
<comment type="sequence caution" evidence="2">
    <conflict type="erroneous initiation">
        <sequence resource="EMBL-CDS" id="AAI49805"/>
    </conflict>
</comment>
<name>QORL2_BOVIN</name>
<organism>
    <name type="scientific">Bos taurus</name>
    <name type="common">Bovine</name>
    <dbReference type="NCBI Taxonomy" id="9913"/>
    <lineage>
        <taxon>Eukaryota</taxon>
        <taxon>Metazoa</taxon>
        <taxon>Chordata</taxon>
        <taxon>Craniata</taxon>
        <taxon>Vertebrata</taxon>
        <taxon>Euteleostomi</taxon>
        <taxon>Mammalia</taxon>
        <taxon>Eutheria</taxon>
        <taxon>Laurasiatheria</taxon>
        <taxon>Artiodactyla</taxon>
        <taxon>Ruminantia</taxon>
        <taxon>Pecora</taxon>
        <taxon>Bovidae</taxon>
        <taxon>Bovinae</taxon>
        <taxon>Bos</taxon>
    </lineage>
</organism>
<feature type="chain" id="PRO_0000341243" description="Quinone oxidoreductase-like protein 2">
    <location>
        <begin position="1"/>
        <end position="349"/>
    </location>
</feature>
<feature type="modified residue" description="N6-acetyllysine" evidence="1">
    <location>
        <position position="35"/>
    </location>
</feature>
<feature type="modified residue" description="N6-succinyllysine" evidence="1">
    <location>
        <position position="200"/>
    </location>
</feature>
<protein>
    <recommendedName>
        <fullName>Quinone oxidoreductase-like protein 2</fullName>
        <ecNumber>1.-.-.-</ecNumber>
    </recommendedName>
</protein>
<accession>A6QQF5</accession>
<proteinExistence type="evidence at transcript level"/>
<dbReference type="EC" id="1.-.-.-"/>
<dbReference type="EMBL" id="BC149804">
    <property type="protein sequence ID" value="AAI49805.1"/>
    <property type="status" value="ALT_INIT"/>
    <property type="molecule type" value="mRNA"/>
</dbReference>
<dbReference type="SMR" id="A6QQF5"/>
<dbReference type="FunCoup" id="A6QQF5">
    <property type="interactions" value="733"/>
</dbReference>
<dbReference type="STRING" id="9913.ENSBTAP00000055781"/>
<dbReference type="PaxDb" id="9913-ENSBTAP00000055781"/>
<dbReference type="PeptideAtlas" id="A6QQF5"/>
<dbReference type="eggNOG" id="KOG1198">
    <property type="taxonomic scope" value="Eukaryota"/>
</dbReference>
<dbReference type="HOGENOM" id="CLU_026673_3_1_1"/>
<dbReference type="InParanoid" id="A6QQF5"/>
<dbReference type="TreeFam" id="TF314255"/>
<dbReference type="Proteomes" id="UP000009136">
    <property type="component" value="Unplaced"/>
</dbReference>
<dbReference type="GO" id="GO:0016491">
    <property type="term" value="F:oxidoreductase activity"/>
    <property type="evidence" value="ECO:0000318"/>
    <property type="project" value="GO_Central"/>
</dbReference>
<dbReference type="CDD" id="cd08241">
    <property type="entry name" value="QOR1"/>
    <property type="match status" value="1"/>
</dbReference>
<dbReference type="Gene3D" id="3.90.180.10">
    <property type="entry name" value="Medium-chain alcohol dehydrogenases, catalytic domain"/>
    <property type="match status" value="1"/>
</dbReference>
<dbReference type="Gene3D" id="3.40.50.720">
    <property type="entry name" value="NAD(P)-binding Rossmann-like Domain"/>
    <property type="match status" value="1"/>
</dbReference>
<dbReference type="InterPro" id="IPR013149">
    <property type="entry name" value="ADH-like_C"/>
</dbReference>
<dbReference type="InterPro" id="IPR013154">
    <property type="entry name" value="ADH-like_N"/>
</dbReference>
<dbReference type="InterPro" id="IPR011032">
    <property type="entry name" value="GroES-like_sf"/>
</dbReference>
<dbReference type="InterPro" id="IPR036291">
    <property type="entry name" value="NAD(P)-bd_dom_sf"/>
</dbReference>
<dbReference type="InterPro" id="IPR020843">
    <property type="entry name" value="PKS_ER"/>
</dbReference>
<dbReference type="InterPro" id="IPR051397">
    <property type="entry name" value="Zn-ADH-like_protein"/>
</dbReference>
<dbReference type="PANTHER" id="PTHR43677:SF4">
    <property type="entry name" value="QUINONE OXIDOREDUCTASE-LIKE PROTEIN 2"/>
    <property type="match status" value="1"/>
</dbReference>
<dbReference type="PANTHER" id="PTHR43677">
    <property type="entry name" value="SHORT-CHAIN DEHYDROGENASE/REDUCTASE"/>
    <property type="match status" value="1"/>
</dbReference>
<dbReference type="Pfam" id="PF08240">
    <property type="entry name" value="ADH_N"/>
    <property type="match status" value="1"/>
</dbReference>
<dbReference type="Pfam" id="PF00107">
    <property type="entry name" value="ADH_zinc_N"/>
    <property type="match status" value="1"/>
</dbReference>
<dbReference type="SMART" id="SM00829">
    <property type="entry name" value="PKS_ER"/>
    <property type="match status" value="1"/>
</dbReference>
<dbReference type="SUPFAM" id="SSF50129">
    <property type="entry name" value="GroES-like"/>
    <property type="match status" value="1"/>
</dbReference>
<dbReference type="SUPFAM" id="SSF51735">
    <property type="entry name" value="NAD(P)-binding Rossmann-fold domains"/>
    <property type="match status" value="1"/>
</dbReference>
<reference key="1">
    <citation type="submission" date="2007-07" db="EMBL/GenBank/DDBJ databases">
        <authorList>
            <consortium name="NIH - Mammalian Gene Collection (MGC) project"/>
        </authorList>
    </citation>
    <scope>NUCLEOTIDE SEQUENCE [LARGE SCALE MRNA]</scope>
    <source>
        <strain>Hereford</strain>
        <tissue>Fetal skin</tissue>
    </source>
</reference>
<sequence>MAAAWGRFLSRAWLCRTAWQGCGRNYRAALCAELKRPLVIEEVTPRPVQPHEVRVNVHFCGINFADILACQGQYQERHQLPFTPGMEFSGMVLETGTDVSTVKEGDRVIGLPGFSGMAEECITDHKNLWQIPEKVSLREAAALPVSYGTAIFALEHRACTQPGETVLVTAAAGATGLAVIDVATNILQAKVIAAAGSDEKCQLAMQSGAQSSVNYSRGSLKEAVGKLVGSGGVNVVIDMVGGDIFLEALRSLAYEGRIVVVGFAGGTIASVPANLLLLKNVSAMGLYWGRYRQQNFPVFSRSLSSALQYCQEGRIQPHIGEVFELEEVNDAFLHVTQRKSTGKVLLSLK</sequence>